<reference key="1">
    <citation type="submission" date="2007-04" db="EMBL/GenBank/DDBJ databases">
        <title>Complete sequence of chromosome of Rhodobacter sphaeroides ATCC 17025.</title>
        <authorList>
            <consortium name="US DOE Joint Genome Institute"/>
            <person name="Copeland A."/>
            <person name="Lucas S."/>
            <person name="Lapidus A."/>
            <person name="Barry K."/>
            <person name="Detter J.C."/>
            <person name="Glavina del Rio T."/>
            <person name="Hammon N."/>
            <person name="Israni S."/>
            <person name="Dalin E."/>
            <person name="Tice H."/>
            <person name="Pitluck S."/>
            <person name="Chertkov O."/>
            <person name="Brettin T."/>
            <person name="Bruce D."/>
            <person name="Han C."/>
            <person name="Schmutz J."/>
            <person name="Larimer F."/>
            <person name="Land M."/>
            <person name="Hauser L."/>
            <person name="Kyrpides N."/>
            <person name="Kim E."/>
            <person name="Richardson P."/>
            <person name="Mackenzie C."/>
            <person name="Choudhary M."/>
            <person name="Donohue T.J."/>
            <person name="Kaplan S."/>
        </authorList>
    </citation>
    <scope>NUCLEOTIDE SEQUENCE [LARGE SCALE GENOMIC DNA]</scope>
    <source>
        <strain>ATCC 17025 / ATH 2.4.3</strain>
    </source>
</reference>
<proteinExistence type="inferred from homology"/>
<comment type="similarity">
    <text evidence="1">Belongs to the universal ribosomal protein uL29 family.</text>
</comment>
<evidence type="ECO:0000255" key="1">
    <source>
        <dbReference type="HAMAP-Rule" id="MF_00374"/>
    </source>
</evidence>
<evidence type="ECO:0000305" key="2"/>
<keyword id="KW-0687">Ribonucleoprotein</keyword>
<keyword id="KW-0689">Ribosomal protein</keyword>
<dbReference type="EMBL" id="CP000661">
    <property type="protein sequence ID" value="ABP71414.1"/>
    <property type="molecule type" value="Genomic_DNA"/>
</dbReference>
<dbReference type="SMR" id="A4WVK0"/>
<dbReference type="STRING" id="349102.Rsph17025_2526"/>
<dbReference type="KEGG" id="rsq:Rsph17025_2526"/>
<dbReference type="eggNOG" id="COG0255">
    <property type="taxonomic scope" value="Bacteria"/>
</dbReference>
<dbReference type="HOGENOM" id="CLU_158491_1_0_5"/>
<dbReference type="BioCyc" id="RSPH349102:G1G8M-2604-MONOMER"/>
<dbReference type="GO" id="GO:0022625">
    <property type="term" value="C:cytosolic large ribosomal subunit"/>
    <property type="evidence" value="ECO:0007669"/>
    <property type="project" value="TreeGrafter"/>
</dbReference>
<dbReference type="GO" id="GO:0003735">
    <property type="term" value="F:structural constituent of ribosome"/>
    <property type="evidence" value="ECO:0007669"/>
    <property type="project" value="InterPro"/>
</dbReference>
<dbReference type="GO" id="GO:0006412">
    <property type="term" value="P:translation"/>
    <property type="evidence" value="ECO:0007669"/>
    <property type="project" value="UniProtKB-UniRule"/>
</dbReference>
<dbReference type="CDD" id="cd00427">
    <property type="entry name" value="Ribosomal_L29_HIP"/>
    <property type="match status" value="1"/>
</dbReference>
<dbReference type="FunFam" id="1.10.287.310:FF:000001">
    <property type="entry name" value="50S ribosomal protein L29"/>
    <property type="match status" value="1"/>
</dbReference>
<dbReference type="Gene3D" id="1.10.287.310">
    <property type="match status" value="1"/>
</dbReference>
<dbReference type="HAMAP" id="MF_00374">
    <property type="entry name" value="Ribosomal_uL29"/>
    <property type="match status" value="1"/>
</dbReference>
<dbReference type="InterPro" id="IPR050063">
    <property type="entry name" value="Ribosomal_protein_uL29"/>
</dbReference>
<dbReference type="InterPro" id="IPR001854">
    <property type="entry name" value="Ribosomal_uL29"/>
</dbReference>
<dbReference type="InterPro" id="IPR018254">
    <property type="entry name" value="Ribosomal_uL29_CS"/>
</dbReference>
<dbReference type="InterPro" id="IPR036049">
    <property type="entry name" value="Ribosomal_uL29_sf"/>
</dbReference>
<dbReference type="NCBIfam" id="TIGR00012">
    <property type="entry name" value="L29"/>
    <property type="match status" value="1"/>
</dbReference>
<dbReference type="PANTHER" id="PTHR10916">
    <property type="entry name" value="60S RIBOSOMAL PROTEIN L35/50S RIBOSOMAL PROTEIN L29"/>
    <property type="match status" value="1"/>
</dbReference>
<dbReference type="PANTHER" id="PTHR10916:SF0">
    <property type="entry name" value="LARGE RIBOSOMAL SUBUNIT PROTEIN UL29C"/>
    <property type="match status" value="1"/>
</dbReference>
<dbReference type="Pfam" id="PF00831">
    <property type="entry name" value="Ribosomal_L29"/>
    <property type="match status" value="1"/>
</dbReference>
<dbReference type="SUPFAM" id="SSF46561">
    <property type="entry name" value="Ribosomal protein L29 (L29p)"/>
    <property type="match status" value="1"/>
</dbReference>
<dbReference type="PROSITE" id="PS00579">
    <property type="entry name" value="RIBOSOMAL_L29"/>
    <property type="match status" value="1"/>
</dbReference>
<gene>
    <name evidence="1" type="primary">rpmC</name>
    <name type="ordered locus">Rsph17025_2526</name>
</gene>
<feature type="chain" id="PRO_1000007585" description="Large ribosomal subunit protein uL29">
    <location>
        <begin position="1"/>
        <end position="67"/>
    </location>
</feature>
<accession>A4WVK0</accession>
<organism>
    <name type="scientific">Cereibacter sphaeroides (strain ATCC 17025 / ATH 2.4.3)</name>
    <name type="common">Rhodobacter sphaeroides</name>
    <dbReference type="NCBI Taxonomy" id="349102"/>
    <lineage>
        <taxon>Bacteria</taxon>
        <taxon>Pseudomonadati</taxon>
        <taxon>Pseudomonadota</taxon>
        <taxon>Alphaproteobacteria</taxon>
        <taxon>Rhodobacterales</taxon>
        <taxon>Paracoccaceae</taxon>
        <taxon>Cereibacter</taxon>
    </lineage>
</organism>
<name>RL29_CERS5</name>
<protein>
    <recommendedName>
        <fullName evidence="1">Large ribosomal subunit protein uL29</fullName>
    </recommendedName>
    <alternativeName>
        <fullName evidence="2">50S ribosomal protein L29</fullName>
    </alternativeName>
</protein>
<sequence length="67" mass="7557">MNAQELRSKTPDQLRDQLVALKKEAFNLRFQQATGQLENTARMRAVRRDVARIKTVLNEMAASAAAN</sequence>